<sequence>MQTTPGKRQRRQRGSINPEDIISGAFELAQQVSIDNLSMPLLGKHLGVGVTSIYWYFRKKDDLLNAMTDRALSKYVFATPYIEAGDWRETLRNHARSMRKTFADNPVLCDLILIRAALSPKTARLGAQEMEKAIANLVTAGLSLEDAFDIYSAVSVHVRGSVVLDRLSRKSQSAGSGPSAIEHPVAIDPATTPLLAHATGRGHRIGAPDETNFEYGLECILDHAGRLIEQSSKAAGEVAVRRPTATADAPTPGARAKAVAR</sequence>
<feature type="chain" id="PRO_0000070662" description="HTH-type transcriptional repressor Rv1353c">
    <location>
        <begin position="1"/>
        <end position="261"/>
    </location>
</feature>
<feature type="domain" description="HTH tetR-type" evidence="1">
    <location>
        <begin position="15"/>
        <end position="75"/>
    </location>
</feature>
<feature type="DNA-binding region" description="H-T-H motif" evidence="1">
    <location>
        <begin position="38"/>
        <end position="57"/>
    </location>
</feature>
<feature type="region of interest" description="Disordered" evidence="2">
    <location>
        <begin position="234"/>
        <end position="261"/>
    </location>
</feature>
<feature type="compositionally biased region" description="Low complexity" evidence="2">
    <location>
        <begin position="241"/>
        <end position="261"/>
    </location>
</feature>
<reference key="1">
    <citation type="journal article" date="1998" name="Nature">
        <title>Deciphering the biology of Mycobacterium tuberculosis from the complete genome sequence.</title>
        <authorList>
            <person name="Cole S.T."/>
            <person name="Brosch R."/>
            <person name="Parkhill J."/>
            <person name="Garnier T."/>
            <person name="Churcher C.M."/>
            <person name="Harris D.E."/>
            <person name="Gordon S.V."/>
            <person name="Eiglmeier K."/>
            <person name="Gas S."/>
            <person name="Barry C.E. III"/>
            <person name="Tekaia F."/>
            <person name="Badcock K."/>
            <person name="Basham D."/>
            <person name="Brown D."/>
            <person name="Chillingworth T."/>
            <person name="Connor R."/>
            <person name="Davies R.M."/>
            <person name="Devlin K."/>
            <person name="Feltwell T."/>
            <person name="Gentles S."/>
            <person name="Hamlin N."/>
            <person name="Holroyd S."/>
            <person name="Hornsby T."/>
            <person name="Jagels K."/>
            <person name="Krogh A."/>
            <person name="McLean J."/>
            <person name="Moule S."/>
            <person name="Murphy L.D."/>
            <person name="Oliver S."/>
            <person name="Osborne J."/>
            <person name="Quail M.A."/>
            <person name="Rajandream M.A."/>
            <person name="Rogers J."/>
            <person name="Rutter S."/>
            <person name="Seeger K."/>
            <person name="Skelton S."/>
            <person name="Squares S."/>
            <person name="Squares R."/>
            <person name="Sulston J.E."/>
            <person name="Taylor K."/>
            <person name="Whitehead S."/>
            <person name="Barrell B.G."/>
        </authorList>
    </citation>
    <scope>NUCLEOTIDE SEQUENCE [LARGE SCALE GENOMIC DNA]</scope>
    <source>
        <strain>ATCC 25618 / H37Rv</strain>
    </source>
</reference>
<reference key="2">
    <citation type="journal article" date="2019" name="Arch. Biochem. Biophys.">
        <title>Mycobacterium tuberculosis Rv0191 is an efflux pump of major facilitator superfamily transporter regulated by Rv1353c.</title>
        <authorList>
            <person name="Li X."/>
            <person name="Li P."/>
            <person name="Ruan C."/>
            <person name="Xie L.X."/>
            <person name="Gu Y."/>
            <person name="Li J."/>
            <person name="Yi Q."/>
            <person name="Lv X."/>
            <person name="Xie J."/>
        </authorList>
    </citation>
    <scope>FUNCTION</scope>
    <scope>DNA-BINDING</scope>
    <scope>INDUCTION</scope>
</reference>
<gene>
    <name type="ordered locus">Rv1353c</name>
    <name type="ORF">MTCY02B10.17c</name>
</gene>
<proteinExistence type="evidence at protein level"/>
<keyword id="KW-0963">Cytoplasm</keyword>
<keyword id="KW-0238">DNA-binding</keyword>
<keyword id="KW-1185">Reference proteome</keyword>
<keyword id="KW-0678">Repressor</keyword>
<keyword id="KW-0804">Transcription</keyword>
<keyword id="KW-0805">Transcription regulation</keyword>
<name>CHLER_MYCTU</name>
<accession>P9WMD3</accession>
<accession>L0T6E2</accession>
<accession>P67434</accession>
<accession>Q11023</accession>
<comment type="function">
    <text evidence="3">Negatively regulates the expression of the efflux pump Rv0191 upon chloramphenicol exposure. Acts by binding to the Rv0191 promoter region.</text>
</comment>
<comment type="subcellular location">
    <subcellularLocation>
        <location evidence="4">Cytoplasm</location>
    </subcellularLocation>
</comment>
<comment type="induction">
    <text evidence="3">Autoregulated.</text>
</comment>
<protein>
    <recommendedName>
        <fullName evidence="4">HTH-type transcriptional repressor Rv1353c</fullName>
    </recommendedName>
</protein>
<organism>
    <name type="scientific">Mycobacterium tuberculosis (strain ATCC 25618 / H37Rv)</name>
    <dbReference type="NCBI Taxonomy" id="83332"/>
    <lineage>
        <taxon>Bacteria</taxon>
        <taxon>Bacillati</taxon>
        <taxon>Actinomycetota</taxon>
        <taxon>Actinomycetes</taxon>
        <taxon>Mycobacteriales</taxon>
        <taxon>Mycobacteriaceae</taxon>
        <taxon>Mycobacterium</taxon>
        <taxon>Mycobacterium tuberculosis complex</taxon>
    </lineage>
</organism>
<evidence type="ECO:0000255" key="1">
    <source>
        <dbReference type="PROSITE-ProRule" id="PRU00335"/>
    </source>
</evidence>
<evidence type="ECO:0000256" key="2">
    <source>
        <dbReference type="SAM" id="MobiDB-lite"/>
    </source>
</evidence>
<evidence type="ECO:0000269" key="3">
    <source>
    </source>
</evidence>
<evidence type="ECO:0000305" key="4"/>
<dbReference type="EMBL" id="AL123456">
    <property type="protein sequence ID" value="CCP44111.1"/>
    <property type="molecule type" value="Genomic_DNA"/>
</dbReference>
<dbReference type="PIR" id="H70740">
    <property type="entry name" value="H70740"/>
</dbReference>
<dbReference type="RefSeq" id="NP_215869.1">
    <property type="nucleotide sequence ID" value="NC_000962.3"/>
</dbReference>
<dbReference type="RefSeq" id="WP_003898836.1">
    <property type="nucleotide sequence ID" value="NZ_NVQJ01000031.1"/>
</dbReference>
<dbReference type="SMR" id="P9WMD3"/>
<dbReference type="FunCoup" id="P9WMD3">
    <property type="interactions" value="5"/>
</dbReference>
<dbReference type="STRING" id="83332.Rv1353c"/>
<dbReference type="PaxDb" id="83332-Rv1353c"/>
<dbReference type="DNASU" id="886827"/>
<dbReference type="GeneID" id="886827"/>
<dbReference type="KEGG" id="mtu:Rv1353c"/>
<dbReference type="KEGG" id="mtv:RVBD_1353c"/>
<dbReference type="TubercuList" id="Rv1353c"/>
<dbReference type="eggNOG" id="COG1309">
    <property type="taxonomic scope" value="Bacteria"/>
</dbReference>
<dbReference type="InParanoid" id="P9WMD3"/>
<dbReference type="OrthoDB" id="4899232at2"/>
<dbReference type="PhylomeDB" id="P9WMD3"/>
<dbReference type="Proteomes" id="UP000001584">
    <property type="component" value="Chromosome"/>
</dbReference>
<dbReference type="GO" id="GO:0005737">
    <property type="term" value="C:cytoplasm"/>
    <property type="evidence" value="ECO:0007669"/>
    <property type="project" value="UniProtKB-SubCell"/>
</dbReference>
<dbReference type="GO" id="GO:0003700">
    <property type="term" value="F:DNA-binding transcription factor activity"/>
    <property type="evidence" value="ECO:0000318"/>
    <property type="project" value="GO_Central"/>
</dbReference>
<dbReference type="GO" id="GO:0000976">
    <property type="term" value="F:transcription cis-regulatory region binding"/>
    <property type="evidence" value="ECO:0000318"/>
    <property type="project" value="GO_Central"/>
</dbReference>
<dbReference type="GO" id="GO:0045892">
    <property type="term" value="P:negative regulation of DNA-templated transcription"/>
    <property type="evidence" value="ECO:0007669"/>
    <property type="project" value="InterPro"/>
</dbReference>
<dbReference type="GO" id="GO:0006355">
    <property type="term" value="P:regulation of DNA-templated transcription"/>
    <property type="evidence" value="ECO:0000318"/>
    <property type="project" value="GO_Central"/>
</dbReference>
<dbReference type="Gene3D" id="1.10.10.60">
    <property type="entry name" value="Homeodomain-like"/>
    <property type="match status" value="1"/>
</dbReference>
<dbReference type="Gene3D" id="1.10.357.10">
    <property type="entry name" value="Tetracycline Repressor, domain 2"/>
    <property type="match status" value="1"/>
</dbReference>
<dbReference type="InterPro" id="IPR023772">
    <property type="entry name" value="DNA-bd_HTH_TetR-type_CS"/>
</dbReference>
<dbReference type="InterPro" id="IPR009057">
    <property type="entry name" value="Homeodomain-like_sf"/>
</dbReference>
<dbReference type="InterPro" id="IPR050109">
    <property type="entry name" value="HTH-type_TetR-like_transc_reg"/>
</dbReference>
<dbReference type="InterPro" id="IPR001647">
    <property type="entry name" value="HTH_TetR"/>
</dbReference>
<dbReference type="InterPro" id="IPR004111">
    <property type="entry name" value="Repressor_TetR_C"/>
</dbReference>
<dbReference type="InterPro" id="IPR036271">
    <property type="entry name" value="Tet_transcr_reg_TetR-rel_C_sf"/>
</dbReference>
<dbReference type="PANTHER" id="PTHR30055">
    <property type="entry name" value="HTH-TYPE TRANSCRIPTIONAL REGULATOR RUTR"/>
    <property type="match status" value="1"/>
</dbReference>
<dbReference type="PANTHER" id="PTHR30055:SF207">
    <property type="entry name" value="HTH-TYPE TRANSCRIPTIONAL REPRESSOR FATR"/>
    <property type="match status" value="1"/>
</dbReference>
<dbReference type="Pfam" id="PF02909">
    <property type="entry name" value="TetR_C_1"/>
    <property type="match status" value="1"/>
</dbReference>
<dbReference type="Pfam" id="PF00440">
    <property type="entry name" value="TetR_N"/>
    <property type="match status" value="1"/>
</dbReference>
<dbReference type="SUPFAM" id="SSF46689">
    <property type="entry name" value="Homeodomain-like"/>
    <property type="match status" value="1"/>
</dbReference>
<dbReference type="SUPFAM" id="SSF48498">
    <property type="entry name" value="Tetracyclin repressor-like, C-terminal domain"/>
    <property type="match status" value="1"/>
</dbReference>
<dbReference type="PROSITE" id="PS01081">
    <property type="entry name" value="HTH_TETR_1"/>
    <property type="match status" value="1"/>
</dbReference>
<dbReference type="PROSITE" id="PS50977">
    <property type="entry name" value="HTH_TETR_2"/>
    <property type="match status" value="1"/>
</dbReference>